<proteinExistence type="inferred from homology"/>
<gene>
    <name type="primary">ychJ</name>
    <name type="ordered locus">Z2009</name>
    <name type="ordered locus">ECs1735</name>
</gene>
<evidence type="ECO:0000305" key="1"/>
<keyword id="KW-1185">Reference proteome</keyword>
<organism>
    <name type="scientific">Escherichia coli O157:H7</name>
    <dbReference type="NCBI Taxonomy" id="83334"/>
    <lineage>
        <taxon>Bacteria</taxon>
        <taxon>Pseudomonadati</taxon>
        <taxon>Pseudomonadota</taxon>
        <taxon>Gammaproteobacteria</taxon>
        <taxon>Enterobacterales</taxon>
        <taxon>Enterobacteriaceae</taxon>
        <taxon>Escherichia</taxon>
    </lineage>
</organism>
<comment type="similarity">
    <text evidence="1">Belongs to the UPF0225 family.</text>
</comment>
<accession>Q8XDB3</accession>
<name>YCHJ_ECO57</name>
<dbReference type="EMBL" id="AE005174">
    <property type="protein sequence ID" value="AAG56090.1"/>
    <property type="molecule type" value="Genomic_DNA"/>
</dbReference>
<dbReference type="EMBL" id="BA000007">
    <property type="protein sequence ID" value="BAB35158.1"/>
    <property type="molecule type" value="Genomic_DNA"/>
</dbReference>
<dbReference type="PIR" id="F85703">
    <property type="entry name" value="F85703"/>
</dbReference>
<dbReference type="PIR" id="G90845">
    <property type="entry name" value="G90845"/>
</dbReference>
<dbReference type="RefSeq" id="NP_309762.1">
    <property type="nucleotide sequence ID" value="NC_002695.1"/>
</dbReference>
<dbReference type="RefSeq" id="WP_001362540.1">
    <property type="nucleotide sequence ID" value="NZ_VOAI01000031.1"/>
</dbReference>
<dbReference type="SMR" id="Q8XDB3"/>
<dbReference type="STRING" id="155864.Z2009"/>
<dbReference type="GeneID" id="913117"/>
<dbReference type="KEGG" id="ece:Z2009"/>
<dbReference type="KEGG" id="ecs:ECs_1735"/>
<dbReference type="PATRIC" id="fig|386585.9.peg.1835"/>
<dbReference type="eggNOG" id="COG3012">
    <property type="taxonomic scope" value="Bacteria"/>
</dbReference>
<dbReference type="HOGENOM" id="CLU_099590_0_0_6"/>
<dbReference type="OMA" id="WLYVDGD"/>
<dbReference type="Proteomes" id="UP000000558">
    <property type="component" value="Chromosome"/>
</dbReference>
<dbReference type="Proteomes" id="UP000002519">
    <property type="component" value="Chromosome"/>
</dbReference>
<dbReference type="Gene3D" id="3.10.450.50">
    <property type="match status" value="1"/>
</dbReference>
<dbReference type="HAMAP" id="MF_00612">
    <property type="entry name" value="UPF0225"/>
    <property type="match status" value="1"/>
</dbReference>
<dbReference type="InterPro" id="IPR032710">
    <property type="entry name" value="NTF2-like_dom_sf"/>
</dbReference>
<dbReference type="InterPro" id="IPR004027">
    <property type="entry name" value="SEC_C_motif"/>
</dbReference>
<dbReference type="InterPro" id="IPR023006">
    <property type="entry name" value="UPF0225"/>
</dbReference>
<dbReference type="InterPro" id="IPR048469">
    <property type="entry name" value="YchJ-like_M"/>
</dbReference>
<dbReference type="NCBIfam" id="NF002449">
    <property type="entry name" value="PRK01617.1"/>
    <property type="match status" value="1"/>
</dbReference>
<dbReference type="NCBIfam" id="NF002486">
    <property type="entry name" value="PRK01752.1"/>
    <property type="match status" value="1"/>
</dbReference>
<dbReference type="PANTHER" id="PTHR33747:SF1">
    <property type="entry name" value="ADENYLATE CYCLASE-ASSOCIATED CAP C-TERMINAL DOMAIN-CONTAINING PROTEIN"/>
    <property type="match status" value="1"/>
</dbReference>
<dbReference type="PANTHER" id="PTHR33747">
    <property type="entry name" value="UPF0225 PROTEIN SCO1677"/>
    <property type="match status" value="1"/>
</dbReference>
<dbReference type="Pfam" id="PF02810">
    <property type="entry name" value="SEC-C"/>
    <property type="match status" value="2"/>
</dbReference>
<dbReference type="Pfam" id="PF17775">
    <property type="entry name" value="YchJ_M-like"/>
    <property type="match status" value="1"/>
</dbReference>
<dbReference type="SUPFAM" id="SSF54427">
    <property type="entry name" value="NTF2-like"/>
    <property type="match status" value="1"/>
</dbReference>
<dbReference type="SUPFAM" id="SSF103642">
    <property type="entry name" value="Sec-C motif"/>
    <property type="match status" value="1"/>
</dbReference>
<protein>
    <recommendedName>
        <fullName>UPF0225 protein YchJ</fullName>
    </recommendedName>
</protein>
<feature type="chain" id="PRO_0000071805" description="UPF0225 protein YchJ">
    <location>
        <begin position="1"/>
        <end position="152"/>
    </location>
</feature>
<reference key="1">
    <citation type="journal article" date="2001" name="Nature">
        <title>Genome sequence of enterohaemorrhagic Escherichia coli O157:H7.</title>
        <authorList>
            <person name="Perna N.T."/>
            <person name="Plunkett G. III"/>
            <person name="Burland V."/>
            <person name="Mau B."/>
            <person name="Glasner J.D."/>
            <person name="Rose D.J."/>
            <person name="Mayhew G.F."/>
            <person name="Evans P.S."/>
            <person name="Gregor J."/>
            <person name="Kirkpatrick H.A."/>
            <person name="Posfai G."/>
            <person name="Hackett J."/>
            <person name="Klink S."/>
            <person name="Boutin A."/>
            <person name="Shao Y."/>
            <person name="Miller L."/>
            <person name="Grotbeck E.J."/>
            <person name="Davis N.W."/>
            <person name="Lim A."/>
            <person name="Dimalanta E.T."/>
            <person name="Potamousis K."/>
            <person name="Apodaca J."/>
            <person name="Anantharaman T.S."/>
            <person name="Lin J."/>
            <person name="Yen G."/>
            <person name="Schwartz D.C."/>
            <person name="Welch R.A."/>
            <person name="Blattner F.R."/>
        </authorList>
    </citation>
    <scope>NUCLEOTIDE SEQUENCE [LARGE SCALE GENOMIC DNA]</scope>
    <source>
        <strain>O157:H7 / EDL933 / ATCC 700927 / EHEC</strain>
    </source>
</reference>
<reference key="2">
    <citation type="journal article" date="2001" name="DNA Res.">
        <title>Complete genome sequence of enterohemorrhagic Escherichia coli O157:H7 and genomic comparison with a laboratory strain K-12.</title>
        <authorList>
            <person name="Hayashi T."/>
            <person name="Makino K."/>
            <person name="Ohnishi M."/>
            <person name="Kurokawa K."/>
            <person name="Ishii K."/>
            <person name="Yokoyama K."/>
            <person name="Han C.-G."/>
            <person name="Ohtsubo E."/>
            <person name="Nakayama K."/>
            <person name="Murata T."/>
            <person name="Tanaka M."/>
            <person name="Tobe T."/>
            <person name="Iida T."/>
            <person name="Takami H."/>
            <person name="Honda T."/>
            <person name="Sasakawa C."/>
            <person name="Ogasawara N."/>
            <person name="Yasunaga T."/>
            <person name="Kuhara S."/>
            <person name="Shiba T."/>
            <person name="Hattori M."/>
            <person name="Shinagawa H."/>
        </authorList>
    </citation>
    <scope>NUCLEOTIDE SEQUENCE [LARGE SCALE GENOMIC DNA]</scope>
    <source>
        <strain>O157:H7 / Sakai / RIMD 0509952 / EHEC</strain>
    </source>
</reference>
<sequence length="152" mass="16972">MSQLCPCGSAVEYSLCCHPYVSGEKVAPDPEHLMRSRYCAFVMQDADYLIKTWHPSCGAAALRAELIAGFAHTEWLGLTVFEHCWQDADNIGFVSFVARFTEGGKTGAIIERSRFLKENGQWYYIDGTRPQFGRNDPCPCGSGKKFKKCCGQ</sequence>